<keyword id="KW-0067">ATP-binding</keyword>
<keyword id="KW-0418">Kinase</keyword>
<keyword id="KW-0545">Nucleotide biosynthesis</keyword>
<keyword id="KW-0547">Nucleotide-binding</keyword>
<keyword id="KW-0808">Transferase</keyword>
<dbReference type="EC" id="2.7.4.9" evidence="1"/>
<dbReference type="EMBL" id="CP000849">
    <property type="protein sequence ID" value="ABV79651.1"/>
    <property type="molecule type" value="Genomic_DNA"/>
</dbReference>
<dbReference type="RefSeq" id="WP_012152168.1">
    <property type="nucleotide sequence ID" value="NC_009883.1"/>
</dbReference>
<dbReference type="SMR" id="A8GXQ1"/>
<dbReference type="KEGG" id="rbo:A1I_06675"/>
<dbReference type="HOGENOM" id="CLU_049131_0_2_5"/>
<dbReference type="GO" id="GO:0005829">
    <property type="term" value="C:cytosol"/>
    <property type="evidence" value="ECO:0007669"/>
    <property type="project" value="TreeGrafter"/>
</dbReference>
<dbReference type="GO" id="GO:0005524">
    <property type="term" value="F:ATP binding"/>
    <property type="evidence" value="ECO:0007669"/>
    <property type="project" value="UniProtKB-UniRule"/>
</dbReference>
<dbReference type="GO" id="GO:0004798">
    <property type="term" value="F:dTMP kinase activity"/>
    <property type="evidence" value="ECO:0007669"/>
    <property type="project" value="UniProtKB-UniRule"/>
</dbReference>
<dbReference type="GO" id="GO:0006233">
    <property type="term" value="P:dTDP biosynthetic process"/>
    <property type="evidence" value="ECO:0007669"/>
    <property type="project" value="InterPro"/>
</dbReference>
<dbReference type="GO" id="GO:0006235">
    <property type="term" value="P:dTTP biosynthetic process"/>
    <property type="evidence" value="ECO:0007669"/>
    <property type="project" value="UniProtKB-UniRule"/>
</dbReference>
<dbReference type="GO" id="GO:0006227">
    <property type="term" value="P:dUDP biosynthetic process"/>
    <property type="evidence" value="ECO:0007669"/>
    <property type="project" value="TreeGrafter"/>
</dbReference>
<dbReference type="CDD" id="cd01672">
    <property type="entry name" value="TMPK"/>
    <property type="match status" value="1"/>
</dbReference>
<dbReference type="FunFam" id="3.40.50.300:FF:000225">
    <property type="entry name" value="Thymidylate kinase"/>
    <property type="match status" value="1"/>
</dbReference>
<dbReference type="Gene3D" id="3.40.50.300">
    <property type="entry name" value="P-loop containing nucleotide triphosphate hydrolases"/>
    <property type="match status" value="1"/>
</dbReference>
<dbReference type="HAMAP" id="MF_00165">
    <property type="entry name" value="Thymidylate_kinase"/>
    <property type="match status" value="1"/>
</dbReference>
<dbReference type="InterPro" id="IPR027417">
    <property type="entry name" value="P-loop_NTPase"/>
</dbReference>
<dbReference type="InterPro" id="IPR039430">
    <property type="entry name" value="Thymidylate_kin-like_dom"/>
</dbReference>
<dbReference type="InterPro" id="IPR018095">
    <property type="entry name" value="Thymidylate_kin_CS"/>
</dbReference>
<dbReference type="InterPro" id="IPR018094">
    <property type="entry name" value="Thymidylate_kinase"/>
</dbReference>
<dbReference type="NCBIfam" id="TIGR00041">
    <property type="entry name" value="DTMP_kinase"/>
    <property type="match status" value="1"/>
</dbReference>
<dbReference type="PANTHER" id="PTHR10344">
    <property type="entry name" value="THYMIDYLATE KINASE"/>
    <property type="match status" value="1"/>
</dbReference>
<dbReference type="PANTHER" id="PTHR10344:SF4">
    <property type="entry name" value="UMP-CMP KINASE 2, MITOCHONDRIAL"/>
    <property type="match status" value="1"/>
</dbReference>
<dbReference type="Pfam" id="PF02223">
    <property type="entry name" value="Thymidylate_kin"/>
    <property type="match status" value="1"/>
</dbReference>
<dbReference type="SUPFAM" id="SSF52540">
    <property type="entry name" value="P-loop containing nucleoside triphosphate hydrolases"/>
    <property type="match status" value="1"/>
</dbReference>
<dbReference type="PROSITE" id="PS01331">
    <property type="entry name" value="THYMIDYLATE_KINASE"/>
    <property type="match status" value="1"/>
</dbReference>
<comment type="function">
    <text evidence="1">Phosphorylation of dTMP to form dTDP in both de novo and salvage pathways of dTTP synthesis.</text>
</comment>
<comment type="catalytic activity">
    <reaction evidence="1">
        <text>dTMP + ATP = dTDP + ADP</text>
        <dbReference type="Rhea" id="RHEA:13517"/>
        <dbReference type="ChEBI" id="CHEBI:30616"/>
        <dbReference type="ChEBI" id="CHEBI:58369"/>
        <dbReference type="ChEBI" id="CHEBI:63528"/>
        <dbReference type="ChEBI" id="CHEBI:456216"/>
        <dbReference type="EC" id="2.7.4.9"/>
    </reaction>
</comment>
<comment type="similarity">
    <text evidence="1">Belongs to the thymidylate kinase family.</text>
</comment>
<protein>
    <recommendedName>
        <fullName evidence="1">Thymidylate kinase</fullName>
        <ecNumber evidence="1">2.7.4.9</ecNumber>
    </recommendedName>
    <alternativeName>
        <fullName evidence="1">dTMP kinase</fullName>
    </alternativeName>
</protein>
<organism>
    <name type="scientific">Rickettsia bellii (strain OSU 85-389)</name>
    <dbReference type="NCBI Taxonomy" id="391896"/>
    <lineage>
        <taxon>Bacteria</taxon>
        <taxon>Pseudomonadati</taxon>
        <taxon>Pseudomonadota</taxon>
        <taxon>Alphaproteobacteria</taxon>
        <taxon>Rickettsiales</taxon>
        <taxon>Rickettsiaceae</taxon>
        <taxon>Rickettsieae</taxon>
        <taxon>Rickettsia</taxon>
        <taxon>belli group</taxon>
    </lineage>
</organism>
<accession>A8GXQ1</accession>
<sequence length="206" mass="23472">MSKLKQGTFITFEGGEGIGKSTQCQMLYEYLKSQNIPVILTREVGGTNVAEKMREILVHTDLLPMSELLQAMAARYDHMVKKIIPALQAGNIVICDRFIDSTACYQGLELENGIELVYNLHKDLMPPLMPDLTFFIDVESSIAIERINSRNMSNKFDVRGLDFYNKIYDCFKGLSKKFPERIVTIKASDLNPEQVHELIKKHLNLI</sequence>
<feature type="chain" id="PRO_1000023269" description="Thymidylate kinase">
    <location>
        <begin position="1"/>
        <end position="206"/>
    </location>
</feature>
<feature type="binding site" evidence="1">
    <location>
        <begin position="14"/>
        <end position="21"/>
    </location>
    <ligand>
        <name>ATP</name>
        <dbReference type="ChEBI" id="CHEBI:30616"/>
    </ligand>
</feature>
<evidence type="ECO:0000255" key="1">
    <source>
        <dbReference type="HAMAP-Rule" id="MF_00165"/>
    </source>
</evidence>
<name>KTHY_RICB8</name>
<proteinExistence type="inferred from homology"/>
<gene>
    <name evidence="1" type="primary">tmk</name>
    <name type="ordered locus">A1I_06675</name>
</gene>
<reference key="1">
    <citation type="submission" date="2007-09" db="EMBL/GenBank/DDBJ databases">
        <title>Complete genome sequencing of Rickettsia bellii.</title>
        <authorList>
            <person name="Madan A."/>
            <person name="Lee H."/>
            <person name="Madan A."/>
            <person name="Yoon J.-G."/>
            <person name="Ryu G.-Y."/>
            <person name="Dasch G."/>
            <person name="Ereemeva M."/>
        </authorList>
    </citation>
    <scope>NUCLEOTIDE SEQUENCE [LARGE SCALE GENOMIC DNA]</scope>
    <source>
        <strain>OSU 85-389</strain>
    </source>
</reference>